<proteinExistence type="inferred from homology"/>
<protein>
    <recommendedName>
        <fullName evidence="1">Small ribosomal subunit protein uS12</fullName>
    </recommendedName>
    <alternativeName>
        <fullName evidence="2">30S ribosomal protein S12</fullName>
    </alternativeName>
</protein>
<feature type="chain" id="PRO_0000146385" description="Small ribosomal subunit protein uS12">
    <location>
        <begin position="1"/>
        <end position="147"/>
    </location>
</feature>
<reference key="1">
    <citation type="journal article" date="1991" name="Nucleic Acids Res.">
        <title>Nucleotide sequence of the genes encoding the L30, S12 and S7 equivalent ribosomal proteins from the archaeum Thermococcus celer.</title>
        <authorList>
            <person name="Klenk H.-P."/>
            <person name="Schwass V."/>
            <person name="Zillig W."/>
        </authorList>
    </citation>
    <scope>NUCLEOTIDE SEQUENCE [GENOMIC DNA]</scope>
    <source>
        <strain>ATCC 35543 / DSM 2476 / JCM 8558 / Vu 13</strain>
    </source>
</reference>
<keyword id="KW-0687">Ribonucleoprotein</keyword>
<keyword id="KW-0689">Ribosomal protein</keyword>
<keyword id="KW-0694">RNA-binding</keyword>
<keyword id="KW-0699">rRNA-binding</keyword>
<name>RS12_THECE</name>
<gene>
    <name evidence="1" type="primary">rps12</name>
</gene>
<sequence>MAGKKAPYGEFAGRKLKLKRKKFRWSDIRYKRRVLRLKEKSDPLEGAPQAKGIVLEKIAVEAKQPNSAMRKAVRVQLIKNGKVVTAFTPGDGAINHIDEHDEVIIEGIGGPKGGSMGDIPGIRYKVVKVNRVSLKELVKGRKEKPRR</sequence>
<comment type="function">
    <text evidence="1">With S4 and S5 plays an important role in translational accuracy. Located at the interface of the 30S and 50S subunits.</text>
</comment>
<comment type="subunit">
    <text evidence="1">Part of the 30S ribosomal subunit.</text>
</comment>
<comment type="similarity">
    <text evidence="1">Belongs to the universal ribosomal protein uS12 family.</text>
</comment>
<accession>P29161</accession>
<dbReference type="EMBL" id="X60305">
    <property type="protein sequence ID" value="CAA42849.1"/>
    <property type="molecule type" value="Genomic_DNA"/>
</dbReference>
<dbReference type="EMBL" id="X67313">
    <property type="protein sequence ID" value="CAA47727.1"/>
    <property type="molecule type" value="Genomic_DNA"/>
</dbReference>
<dbReference type="PIR" id="S18713">
    <property type="entry name" value="S18713"/>
</dbReference>
<dbReference type="SMR" id="P29161"/>
<dbReference type="GO" id="GO:0015935">
    <property type="term" value="C:small ribosomal subunit"/>
    <property type="evidence" value="ECO:0007669"/>
    <property type="project" value="InterPro"/>
</dbReference>
<dbReference type="GO" id="GO:0019843">
    <property type="term" value="F:rRNA binding"/>
    <property type="evidence" value="ECO:0007669"/>
    <property type="project" value="UniProtKB-UniRule"/>
</dbReference>
<dbReference type="GO" id="GO:0003735">
    <property type="term" value="F:structural constituent of ribosome"/>
    <property type="evidence" value="ECO:0007669"/>
    <property type="project" value="InterPro"/>
</dbReference>
<dbReference type="GO" id="GO:0006412">
    <property type="term" value="P:translation"/>
    <property type="evidence" value="ECO:0007669"/>
    <property type="project" value="UniProtKB-UniRule"/>
</dbReference>
<dbReference type="CDD" id="cd03367">
    <property type="entry name" value="Ribosomal_S23"/>
    <property type="match status" value="1"/>
</dbReference>
<dbReference type="FunFam" id="2.40.50.140:FF:000007">
    <property type="entry name" value="40S ribosomal protein S23"/>
    <property type="match status" value="1"/>
</dbReference>
<dbReference type="Gene3D" id="2.40.50.140">
    <property type="entry name" value="Nucleic acid-binding proteins"/>
    <property type="match status" value="1"/>
</dbReference>
<dbReference type="HAMAP" id="MF_00403_A">
    <property type="entry name" value="Ribosomal_uS12_A"/>
    <property type="match status" value="1"/>
</dbReference>
<dbReference type="InterPro" id="IPR012340">
    <property type="entry name" value="NA-bd_OB-fold"/>
</dbReference>
<dbReference type="InterPro" id="IPR006032">
    <property type="entry name" value="Ribosomal_uS12"/>
</dbReference>
<dbReference type="InterPro" id="IPR022863">
    <property type="entry name" value="Ribosomal_uS12_arc"/>
</dbReference>
<dbReference type="InterPro" id="IPR005679">
    <property type="entry name" value="Ribosomal_uS12_bac"/>
</dbReference>
<dbReference type="InterPro" id="IPR005680">
    <property type="entry name" value="Ribosomal_uS12_euk/arc"/>
</dbReference>
<dbReference type="NCBIfam" id="NF003254">
    <property type="entry name" value="PRK04211.1"/>
    <property type="match status" value="1"/>
</dbReference>
<dbReference type="NCBIfam" id="TIGR00982">
    <property type="entry name" value="uS12_E_A"/>
    <property type="match status" value="1"/>
</dbReference>
<dbReference type="PANTHER" id="PTHR11652">
    <property type="entry name" value="30S RIBOSOMAL PROTEIN S12 FAMILY MEMBER"/>
    <property type="match status" value="1"/>
</dbReference>
<dbReference type="Pfam" id="PF00164">
    <property type="entry name" value="Ribosom_S12_S23"/>
    <property type="match status" value="1"/>
</dbReference>
<dbReference type="PIRSF" id="PIRSF002133">
    <property type="entry name" value="Ribosomal_S12/S23"/>
    <property type="match status" value="1"/>
</dbReference>
<dbReference type="PRINTS" id="PR01034">
    <property type="entry name" value="RIBOSOMALS12"/>
</dbReference>
<dbReference type="SUPFAM" id="SSF50249">
    <property type="entry name" value="Nucleic acid-binding proteins"/>
    <property type="match status" value="1"/>
</dbReference>
<dbReference type="PROSITE" id="PS00055">
    <property type="entry name" value="RIBOSOMAL_S12"/>
    <property type="match status" value="1"/>
</dbReference>
<evidence type="ECO:0000255" key="1">
    <source>
        <dbReference type="HAMAP-Rule" id="MF_00403"/>
    </source>
</evidence>
<evidence type="ECO:0000305" key="2"/>
<organism>
    <name type="scientific">Thermococcus celer</name>
    <dbReference type="NCBI Taxonomy" id="2264"/>
    <lineage>
        <taxon>Archaea</taxon>
        <taxon>Methanobacteriati</taxon>
        <taxon>Methanobacteriota</taxon>
        <taxon>Thermococci</taxon>
        <taxon>Thermococcales</taxon>
        <taxon>Thermococcaceae</taxon>
        <taxon>Thermococcus</taxon>
    </lineage>
</organism>